<organism>
    <name type="scientific">Aspergillus fumigatus (strain ATCC MYA-4609 / CBS 101355 / FGSC A1100 / Af293)</name>
    <name type="common">Neosartorya fumigata</name>
    <dbReference type="NCBI Taxonomy" id="330879"/>
    <lineage>
        <taxon>Eukaryota</taxon>
        <taxon>Fungi</taxon>
        <taxon>Dikarya</taxon>
        <taxon>Ascomycota</taxon>
        <taxon>Pezizomycotina</taxon>
        <taxon>Eurotiomycetes</taxon>
        <taxon>Eurotiomycetidae</taxon>
        <taxon>Eurotiales</taxon>
        <taxon>Aspergillaceae</taxon>
        <taxon>Aspergillus</taxon>
        <taxon>Aspergillus subgen. Fumigati</taxon>
    </lineage>
</organism>
<gene>
    <name type="primary">rny1</name>
    <name type="ORF">AFUA_3G11220</name>
</gene>
<name>RNY1_ASPFU</name>
<sequence length="408" mass="45499">MLQSIPGPQHILKALTGSLGLSTIFEPDHEASQNSFQCSKPELSCHAQYHGQDTCCFNYPGGQMLQTQFWDADPAVGPVDSWTIHGLWPDFCDGGFDQYCDSKRRYSNISLILVDSGRADLLEYMSDFWKDFRGDDEDLWEHEWNKHGTCISTLETTCYADYYPQQEVVDYFNKTVEIFQKLPTYQTLANAGIVPSHTETYTLDEIQAALAKAHAAPVTIRCRNRALNEVWYHFNIAGSLQTGTFVPSEPDGLKTNCPATGIHYIPKKHREPSRTTDTPSQPTTTGTPFKGRGNLIVSSMGGRRGCIISRGKWFASGTCATFKAKKATDDTFTLQSSKGICAFEGDAFSCGPHVTAPEEFSVQDGKLSYRGNTTFFADKAPKGRTQSTIFASQDEHLIDLAITWKERR</sequence>
<protein>
    <recommendedName>
        <fullName>Ribonuclease T2-like</fullName>
        <shortName>RNase T2-like</shortName>
        <ecNumber>4.6.1.19</ecNumber>
    </recommendedName>
</protein>
<proteinExistence type="inferred from homology"/>
<dbReference type="EC" id="4.6.1.19"/>
<dbReference type="EMBL" id="AAHF01000002">
    <property type="protein sequence ID" value="EAL92458.2"/>
    <property type="molecule type" value="Genomic_DNA"/>
</dbReference>
<dbReference type="RefSeq" id="XP_754496.2">
    <property type="nucleotide sequence ID" value="XM_749403.2"/>
</dbReference>
<dbReference type="SMR" id="Q4WXZ5"/>
<dbReference type="FunCoup" id="Q4WXZ5">
    <property type="interactions" value="140"/>
</dbReference>
<dbReference type="GlyCosmos" id="Q4WXZ5">
    <property type="glycosylation" value="3 sites, No reported glycans"/>
</dbReference>
<dbReference type="EnsemblFungi" id="EAL92458">
    <property type="protein sequence ID" value="EAL92458"/>
    <property type="gene ID" value="AFUA_3G11220"/>
</dbReference>
<dbReference type="GeneID" id="3512104"/>
<dbReference type="KEGG" id="afm:AFUA_3G11220"/>
<dbReference type="VEuPathDB" id="FungiDB:Afu3g11220"/>
<dbReference type="eggNOG" id="KOG1642">
    <property type="taxonomic scope" value="Eukaryota"/>
</dbReference>
<dbReference type="HOGENOM" id="CLU_037966_0_1_1"/>
<dbReference type="InParanoid" id="Q4WXZ5"/>
<dbReference type="OMA" id="YMSEYWK"/>
<dbReference type="OrthoDB" id="435754at2759"/>
<dbReference type="Proteomes" id="UP000002530">
    <property type="component" value="Chromosome 3"/>
</dbReference>
<dbReference type="GO" id="GO:0005576">
    <property type="term" value="C:extracellular region"/>
    <property type="evidence" value="ECO:0000318"/>
    <property type="project" value="GO_Central"/>
</dbReference>
<dbReference type="GO" id="GO:0005775">
    <property type="term" value="C:vacuolar lumen"/>
    <property type="evidence" value="ECO:0007669"/>
    <property type="project" value="UniProtKB-SubCell"/>
</dbReference>
<dbReference type="GO" id="GO:0033897">
    <property type="term" value="F:ribonuclease T2 activity"/>
    <property type="evidence" value="ECO:0007669"/>
    <property type="project" value="UniProtKB-EC"/>
</dbReference>
<dbReference type="GO" id="GO:0003723">
    <property type="term" value="F:RNA binding"/>
    <property type="evidence" value="ECO:0007669"/>
    <property type="project" value="InterPro"/>
</dbReference>
<dbReference type="GO" id="GO:0004521">
    <property type="term" value="F:RNA endonuclease activity"/>
    <property type="evidence" value="ECO:0000318"/>
    <property type="project" value="GO_Central"/>
</dbReference>
<dbReference type="GO" id="GO:0006401">
    <property type="term" value="P:RNA catabolic process"/>
    <property type="evidence" value="ECO:0000318"/>
    <property type="project" value="GO_Central"/>
</dbReference>
<dbReference type="CDD" id="cd01061">
    <property type="entry name" value="RNase_T2_euk"/>
    <property type="match status" value="1"/>
</dbReference>
<dbReference type="FunFam" id="3.90.730.10:FF:000004">
    <property type="entry name" value="Ribonuclease T2-like"/>
    <property type="match status" value="1"/>
</dbReference>
<dbReference type="Gene3D" id="3.90.730.10">
    <property type="entry name" value="Ribonuclease T2-like"/>
    <property type="match status" value="1"/>
</dbReference>
<dbReference type="InterPro" id="IPR033697">
    <property type="entry name" value="Ribonuclease_T2_eukaryotic"/>
</dbReference>
<dbReference type="InterPro" id="IPR001568">
    <property type="entry name" value="RNase_T2-like"/>
</dbReference>
<dbReference type="InterPro" id="IPR036430">
    <property type="entry name" value="RNase_T2-like_sf"/>
</dbReference>
<dbReference type="InterPro" id="IPR018188">
    <property type="entry name" value="RNase_T2_His_AS_1"/>
</dbReference>
<dbReference type="InterPro" id="IPR033130">
    <property type="entry name" value="RNase_T2_His_AS_2"/>
</dbReference>
<dbReference type="PANTHER" id="PTHR11240">
    <property type="entry name" value="RIBONUCLEASE T2"/>
    <property type="match status" value="1"/>
</dbReference>
<dbReference type="PANTHER" id="PTHR11240:SF22">
    <property type="entry name" value="RIBONUCLEASE T2"/>
    <property type="match status" value="1"/>
</dbReference>
<dbReference type="Pfam" id="PF00445">
    <property type="entry name" value="Ribonuclease_T2"/>
    <property type="match status" value="1"/>
</dbReference>
<dbReference type="Pfam" id="PF25488">
    <property type="entry name" value="RNaseT2L_C"/>
    <property type="match status" value="1"/>
</dbReference>
<dbReference type="SUPFAM" id="SSF55895">
    <property type="entry name" value="Ribonuclease Rh-like"/>
    <property type="match status" value="1"/>
</dbReference>
<dbReference type="PROSITE" id="PS00530">
    <property type="entry name" value="RNASE_T2_1"/>
    <property type="match status" value="1"/>
</dbReference>
<dbReference type="PROSITE" id="PS00531">
    <property type="entry name" value="RNASE_T2_2"/>
    <property type="match status" value="1"/>
</dbReference>
<accession>Q4WXZ5</accession>
<feature type="signal peptide" evidence="2">
    <location>
        <begin position="1"/>
        <end position="25"/>
    </location>
</feature>
<feature type="chain" id="PRO_0000043250" description="Ribonuclease T2-like">
    <location>
        <begin position="26"/>
        <end position="408"/>
    </location>
</feature>
<feature type="region of interest" description="Disordered" evidence="5">
    <location>
        <begin position="268"/>
        <end position="292"/>
    </location>
</feature>
<feature type="compositionally biased region" description="Low complexity" evidence="5">
    <location>
        <begin position="275"/>
        <end position="288"/>
    </location>
</feature>
<feature type="active site" evidence="1">
    <location>
        <position position="85"/>
    </location>
</feature>
<feature type="active site" evidence="1">
    <location>
        <position position="143"/>
    </location>
</feature>
<feature type="active site" evidence="1">
    <location>
        <position position="147"/>
    </location>
</feature>
<feature type="glycosylation site" description="N-linked (GlcNAc...) asparagine" evidence="2">
    <location>
        <position position="108"/>
    </location>
</feature>
<feature type="glycosylation site" description="N-linked (GlcNAc...) asparagine" evidence="2">
    <location>
        <position position="173"/>
    </location>
</feature>
<feature type="glycosylation site" description="N-linked (GlcNAc...) asparagine" evidence="2">
    <location>
        <position position="372"/>
    </location>
</feature>
<feature type="disulfide bond" evidence="1">
    <location>
        <begin position="38"/>
        <end position="56"/>
    </location>
</feature>
<feature type="disulfide bond" evidence="1">
    <location>
        <begin position="45"/>
        <end position="92"/>
    </location>
</feature>
<feature type="disulfide bond" evidence="1">
    <location>
        <begin position="55"/>
        <end position="158"/>
    </location>
</feature>
<feature type="disulfide bond" evidence="1">
    <location>
        <begin position="100"/>
        <end position="150"/>
    </location>
</feature>
<feature type="disulfide bond" evidence="1">
    <location>
        <begin position="222"/>
        <end position="257"/>
    </location>
</feature>
<comment type="function">
    <text evidence="1">Rnase which modulates cell survival under stress conditions. Released from the vacuole to the cytoplasm during stress to promote tRNA and rRNA cleavage and to activate separately a downstream pathway that promotes cell death. Involved in cell size, vacuolar morphology and growth at high temperatures and high salt concentration (By similarity).</text>
</comment>
<comment type="catalytic activity">
    <reaction evidence="3 4">
        <text>a ribonucleotidyl-ribonucleotide-RNA + H2O = a 3'-end 3'-phospho-ribonucleotide-RNA + a 5'-end dephospho-ribonucleoside-RNA + H(+)</text>
        <dbReference type="Rhea" id="RHEA:68052"/>
        <dbReference type="Rhea" id="RHEA-COMP:10463"/>
        <dbReference type="Rhea" id="RHEA-COMP:13936"/>
        <dbReference type="Rhea" id="RHEA-COMP:17355"/>
        <dbReference type="ChEBI" id="CHEBI:15377"/>
        <dbReference type="ChEBI" id="CHEBI:15378"/>
        <dbReference type="ChEBI" id="CHEBI:83062"/>
        <dbReference type="ChEBI" id="CHEBI:138284"/>
        <dbReference type="ChEBI" id="CHEBI:173118"/>
        <dbReference type="EC" id="4.6.1.19"/>
    </reaction>
</comment>
<comment type="subcellular location">
    <subcellularLocation>
        <location>Vacuole lumen</location>
    </subcellularLocation>
    <subcellularLocation>
        <location>Cytoplasm</location>
    </subcellularLocation>
    <text evidence="1">Is released from the vacuole to the cytoplasm during stress conditions like oxidative stress or stationary phase stress.</text>
</comment>
<comment type="similarity">
    <text evidence="6">Belongs to the RNase T2 family.</text>
</comment>
<reference key="1">
    <citation type="journal article" date="2005" name="Nature">
        <title>Genomic sequence of the pathogenic and allergenic filamentous fungus Aspergillus fumigatus.</title>
        <authorList>
            <person name="Nierman W.C."/>
            <person name="Pain A."/>
            <person name="Anderson M.J."/>
            <person name="Wortman J.R."/>
            <person name="Kim H.S."/>
            <person name="Arroyo J."/>
            <person name="Berriman M."/>
            <person name="Abe K."/>
            <person name="Archer D.B."/>
            <person name="Bermejo C."/>
            <person name="Bennett J.W."/>
            <person name="Bowyer P."/>
            <person name="Chen D."/>
            <person name="Collins M."/>
            <person name="Coulsen R."/>
            <person name="Davies R."/>
            <person name="Dyer P.S."/>
            <person name="Farman M.L."/>
            <person name="Fedorova N."/>
            <person name="Fedorova N.D."/>
            <person name="Feldblyum T.V."/>
            <person name="Fischer R."/>
            <person name="Fosker N."/>
            <person name="Fraser A."/>
            <person name="Garcia J.L."/>
            <person name="Garcia M.J."/>
            <person name="Goble A."/>
            <person name="Goldman G.H."/>
            <person name="Gomi K."/>
            <person name="Griffith-Jones S."/>
            <person name="Gwilliam R."/>
            <person name="Haas B.J."/>
            <person name="Haas H."/>
            <person name="Harris D.E."/>
            <person name="Horiuchi H."/>
            <person name="Huang J."/>
            <person name="Humphray S."/>
            <person name="Jimenez J."/>
            <person name="Keller N."/>
            <person name="Khouri H."/>
            <person name="Kitamoto K."/>
            <person name="Kobayashi T."/>
            <person name="Konzack S."/>
            <person name="Kulkarni R."/>
            <person name="Kumagai T."/>
            <person name="Lafton A."/>
            <person name="Latge J.-P."/>
            <person name="Li W."/>
            <person name="Lord A."/>
            <person name="Lu C."/>
            <person name="Majoros W.H."/>
            <person name="May G.S."/>
            <person name="Miller B.L."/>
            <person name="Mohamoud Y."/>
            <person name="Molina M."/>
            <person name="Monod M."/>
            <person name="Mouyna I."/>
            <person name="Mulligan S."/>
            <person name="Murphy L.D."/>
            <person name="O'Neil S."/>
            <person name="Paulsen I."/>
            <person name="Penalva M.A."/>
            <person name="Pertea M."/>
            <person name="Price C."/>
            <person name="Pritchard B.L."/>
            <person name="Quail M.A."/>
            <person name="Rabbinowitsch E."/>
            <person name="Rawlins N."/>
            <person name="Rajandream M.A."/>
            <person name="Reichard U."/>
            <person name="Renauld H."/>
            <person name="Robson G.D."/>
            <person name="Rodriguez de Cordoba S."/>
            <person name="Rodriguez-Pena J.M."/>
            <person name="Ronning C.M."/>
            <person name="Rutter S."/>
            <person name="Salzberg S.L."/>
            <person name="Sanchez M."/>
            <person name="Sanchez-Ferrero J.C."/>
            <person name="Saunders D."/>
            <person name="Seeger K."/>
            <person name="Squares R."/>
            <person name="Squares S."/>
            <person name="Takeuchi M."/>
            <person name="Tekaia F."/>
            <person name="Turner G."/>
            <person name="Vazquez de Aldana C.R."/>
            <person name="Weidman J."/>
            <person name="White O."/>
            <person name="Woodward J.R."/>
            <person name="Yu J.-H."/>
            <person name="Fraser C.M."/>
            <person name="Galagan J.E."/>
            <person name="Asai K."/>
            <person name="Machida M."/>
            <person name="Hall N."/>
            <person name="Barrell B.G."/>
            <person name="Denning D.W."/>
        </authorList>
    </citation>
    <scope>NUCLEOTIDE SEQUENCE [LARGE SCALE GENOMIC DNA]</scope>
    <source>
        <strain>ATCC MYA-4609 / CBS 101355 / FGSC A1100 / Af293</strain>
    </source>
</reference>
<keyword id="KW-0963">Cytoplasm</keyword>
<keyword id="KW-1015">Disulfide bond</keyword>
<keyword id="KW-0255">Endonuclease</keyword>
<keyword id="KW-0325">Glycoprotein</keyword>
<keyword id="KW-0378">Hydrolase</keyword>
<keyword id="KW-0456">Lyase</keyword>
<keyword id="KW-0540">Nuclease</keyword>
<keyword id="KW-1185">Reference proteome</keyword>
<keyword id="KW-0732">Signal</keyword>
<keyword id="KW-0926">Vacuole</keyword>
<evidence type="ECO:0000250" key="1"/>
<evidence type="ECO:0000255" key="2"/>
<evidence type="ECO:0000255" key="3">
    <source>
        <dbReference type="PROSITE-ProRule" id="PRU10045"/>
    </source>
</evidence>
<evidence type="ECO:0000255" key="4">
    <source>
        <dbReference type="PROSITE-ProRule" id="PRU10046"/>
    </source>
</evidence>
<evidence type="ECO:0000256" key="5">
    <source>
        <dbReference type="SAM" id="MobiDB-lite"/>
    </source>
</evidence>
<evidence type="ECO:0000305" key="6"/>